<protein>
    <recommendedName>
        <fullName evidence="1">Small ribosomal subunit protein uS4</fullName>
    </recommendedName>
    <alternativeName>
        <fullName evidence="2">30S ribosomal protein S4</fullName>
    </alternativeName>
</protein>
<name>RS4_STRA1</name>
<proteinExistence type="inferred from homology"/>
<sequence>MSRYTGPSWKQSRRLGLSLTGTGKELARRNYVPGQHGPNNRSKLSEYGLQLAEKQKLRFSYGLGEKQFRNLFVQATKAKEGTLGFNFMVLLERRLDNVVYRLGLATTRRQARQFVNHGHILVDGKRVDIPSYRVTPGQVISVREKSMKVPAILEAVEATLGRPAFVSFDAEKLEGSLTRLPERDEINPEINEALVVEFYNKML</sequence>
<organism>
    <name type="scientific">Streptococcus agalactiae serotype Ia (strain ATCC 27591 / A909 / CDC SS700)</name>
    <dbReference type="NCBI Taxonomy" id="205921"/>
    <lineage>
        <taxon>Bacteria</taxon>
        <taxon>Bacillati</taxon>
        <taxon>Bacillota</taxon>
        <taxon>Bacilli</taxon>
        <taxon>Lactobacillales</taxon>
        <taxon>Streptococcaceae</taxon>
        <taxon>Streptococcus</taxon>
    </lineage>
</organism>
<accession>Q3JYG8</accession>
<reference key="1">
    <citation type="journal article" date="2005" name="Proc. Natl. Acad. Sci. U.S.A.">
        <title>Genome analysis of multiple pathogenic isolates of Streptococcus agalactiae: implications for the microbial 'pan-genome'.</title>
        <authorList>
            <person name="Tettelin H."/>
            <person name="Masignani V."/>
            <person name="Cieslewicz M.J."/>
            <person name="Donati C."/>
            <person name="Medini D."/>
            <person name="Ward N.L."/>
            <person name="Angiuoli S.V."/>
            <person name="Crabtree J."/>
            <person name="Jones A.L."/>
            <person name="Durkin A.S."/>
            <person name="DeBoy R.T."/>
            <person name="Davidsen T.M."/>
            <person name="Mora M."/>
            <person name="Scarselli M."/>
            <person name="Margarit y Ros I."/>
            <person name="Peterson J.D."/>
            <person name="Hauser C.R."/>
            <person name="Sundaram J.P."/>
            <person name="Nelson W.C."/>
            <person name="Madupu R."/>
            <person name="Brinkac L.M."/>
            <person name="Dodson R.J."/>
            <person name="Rosovitz M.J."/>
            <person name="Sullivan S.A."/>
            <person name="Daugherty S.C."/>
            <person name="Haft D.H."/>
            <person name="Selengut J."/>
            <person name="Gwinn M.L."/>
            <person name="Zhou L."/>
            <person name="Zafar N."/>
            <person name="Khouri H."/>
            <person name="Radune D."/>
            <person name="Dimitrov G."/>
            <person name="Watkins K."/>
            <person name="O'Connor K.J."/>
            <person name="Smith S."/>
            <person name="Utterback T.R."/>
            <person name="White O."/>
            <person name="Rubens C.E."/>
            <person name="Grandi G."/>
            <person name="Madoff L.C."/>
            <person name="Kasper D.L."/>
            <person name="Telford J.L."/>
            <person name="Wessels M.R."/>
            <person name="Rappuoli R."/>
            <person name="Fraser C.M."/>
        </authorList>
    </citation>
    <scope>NUCLEOTIDE SEQUENCE [LARGE SCALE GENOMIC DNA]</scope>
    <source>
        <strain>ATCC 27591 / A909 / CDC SS700</strain>
    </source>
</reference>
<comment type="function">
    <text evidence="1">One of the primary rRNA binding proteins, it binds directly to 16S rRNA where it nucleates assembly of the body of the 30S subunit.</text>
</comment>
<comment type="function">
    <text evidence="1">With S5 and S12 plays an important role in translational accuracy.</text>
</comment>
<comment type="subunit">
    <text evidence="1">Part of the 30S ribosomal subunit. Contacts protein S5. The interaction surface between S4 and S5 is involved in control of translational fidelity.</text>
</comment>
<comment type="similarity">
    <text evidence="1">Belongs to the universal ribosomal protein uS4 family.</text>
</comment>
<keyword id="KW-0687">Ribonucleoprotein</keyword>
<keyword id="KW-0689">Ribosomal protein</keyword>
<keyword id="KW-0694">RNA-binding</keyword>
<keyword id="KW-0699">rRNA-binding</keyword>
<evidence type="ECO:0000255" key="1">
    <source>
        <dbReference type="HAMAP-Rule" id="MF_01306"/>
    </source>
</evidence>
<evidence type="ECO:0000305" key="2"/>
<dbReference type="EMBL" id="CP000114">
    <property type="protein sequence ID" value="ABA44661.1"/>
    <property type="molecule type" value="Genomic_DNA"/>
</dbReference>
<dbReference type="RefSeq" id="WP_000092759.1">
    <property type="nucleotide sequence ID" value="NC_007432.1"/>
</dbReference>
<dbReference type="SMR" id="Q3JYG8"/>
<dbReference type="GeneID" id="66886872"/>
<dbReference type="KEGG" id="sak:SAK_2095"/>
<dbReference type="HOGENOM" id="CLU_092403_0_1_9"/>
<dbReference type="GO" id="GO:0015935">
    <property type="term" value="C:small ribosomal subunit"/>
    <property type="evidence" value="ECO:0007669"/>
    <property type="project" value="InterPro"/>
</dbReference>
<dbReference type="GO" id="GO:0019843">
    <property type="term" value="F:rRNA binding"/>
    <property type="evidence" value="ECO:0007669"/>
    <property type="project" value="UniProtKB-UniRule"/>
</dbReference>
<dbReference type="GO" id="GO:0003735">
    <property type="term" value="F:structural constituent of ribosome"/>
    <property type="evidence" value="ECO:0007669"/>
    <property type="project" value="InterPro"/>
</dbReference>
<dbReference type="GO" id="GO:0042274">
    <property type="term" value="P:ribosomal small subunit biogenesis"/>
    <property type="evidence" value="ECO:0007669"/>
    <property type="project" value="TreeGrafter"/>
</dbReference>
<dbReference type="GO" id="GO:0006412">
    <property type="term" value="P:translation"/>
    <property type="evidence" value="ECO:0007669"/>
    <property type="project" value="UniProtKB-UniRule"/>
</dbReference>
<dbReference type="CDD" id="cd00165">
    <property type="entry name" value="S4"/>
    <property type="match status" value="1"/>
</dbReference>
<dbReference type="FunFam" id="1.10.1050.10:FF:000001">
    <property type="entry name" value="30S ribosomal protein S4"/>
    <property type="match status" value="1"/>
</dbReference>
<dbReference type="FunFam" id="3.10.290.10:FF:000001">
    <property type="entry name" value="30S ribosomal protein S4"/>
    <property type="match status" value="1"/>
</dbReference>
<dbReference type="Gene3D" id="1.10.1050.10">
    <property type="entry name" value="Ribosomal Protein S4 Delta 41, Chain A, domain 1"/>
    <property type="match status" value="1"/>
</dbReference>
<dbReference type="Gene3D" id="3.10.290.10">
    <property type="entry name" value="RNA-binding S4 domain"/>
    <property type="match status" value="1"/>
</dbReference>
<dbReference type="HAMAP" id="MF_01306_B">
    <property type="entry name" value="Ribosomal_uS4_B"/>
    <property type="match status" value="1"/>
</dbReference>
<dbReference type="InterPro" id="IPR022801">
    <property type="entry name" value="Ribosomal_uS4"/>
</dbReference>
<dbReference type="InterPro" id="IPR005709">
    <property type="entry name" value="Ribosomal_uS4_bac-type"/>
</dbReference>
<dbReference type="InterPro" id="IPR018079">
    <property type="entry name" value="Ribosomal_uS4_CS"/>
</dbReference>
<dbReference type="InterPro" id="IPR001912">
    <property type="entry name" value="Ribosomal_uS4_N"/>
</dbReference>
<dbReference type="InterPro" id="IPR002942">
    <property type="entry name" value="S4_RNA-bd"/>
</dbReference>
<dbReference type="InterPro" id="IPR036986">
    <property type="entry name" value="S4_RNA-bd_sf"/>
</dbReference>
<dbReference type="NCBIfam" id="NF003717">
    <property type="entry name" value="PRK05327.1"/>
    <property type="match status" value="1"/>
</dbReference>
<dbReference type="NCBIfam" id="TIGR01017">
    <property type="entry name" value="rpsD_bact"/>
    <property type="match status" value="1"/>
</dbReference>
<dbReference type="PANTHER" id="PTHR11831">
    <property type="entry name" value="30S 40S RIBOSOMAL PROTEIN"/>
    <property type="match status" value="1"/>
</dbReference>
<dbReference type="PANTHER" id="PTHR11831:SF4">
    <property type="entry name" value="SMALL RIBOSOMAL SUBUNIT PROTEIN US4M"/>
    <property type="match status" value="1"/>
</dbReference>
<dbReference type="Pfam" id="PF00163">
    <property type="entry name" value="Ribosomal_S4"/>
    <property type="match status" value="1"/>
</dbReference>
<dbReference type="Pfam" id="PF01479">
    <property type="entry name" value="S4"/>
    <property type="match status" value="1"/>
</dbReference>
<dbReference type="SMART" id="SM01390">
    <property type="entry name" value="Ribosomal_S4"/>
    <property type="match status" value="1"/>
</dbReference>
<dbReference type="SMART" id="SM00363">
    <property type="entry name" value="S4"/>
    <property type="match status" value="1"/>
</dbReference>
<dbReference type="SUPFAM" id="SSF55174">
    <property type="entry name" value="Alpha-L RNA-binding motif"/>
    <property type="match status" value="1"/>
</dbReference>
<dbReference type="PROSITE" id="PS00632">
    <property type="entry name" value="RIBOSOMAL_S4"/>
    <property type="match status" value="1"/>
</dbReference>
<dbReference type="PROSITE" id="PS50889">
    <property type="entry name" value="S4"/>
    <property type="match status" value="1"/>
</dbReference>
<gene>
    <name evidence="1" type="primary">rpsD</name>
    <name type="ordered locus">SAK_2095</name>
</gene>
<feature type="chain" id="PRO_0000228928" description="Small ribosomal subunit protein uS4">
    <location>
        <begin position="1"/>
        <end position="203"/>
    </location>
</feature>
<feature type="domain" description="S4 RNA-binding" evidence="1">
    <location>
        <begin position="93"/>
        <end position="156"/>
    </location>
</feature>